<proteinExistence type="inferred from homology"/>
<evidence type="ECO:0000255" key="1">
    <source>
        <dbReference type="HAMAP-Rule" id="MF_01858"/>
    </source>
</evidence>
<evidence type="ECO:0000256" key="2">
    <source>
        <dbReference type="SAM" id="MobiDB-lite"/>
    </source>
</evidence>
<protein>
    <recommendedName>
        <fullName evidence="1">Ribosomal RNA large subunit methyltransferase K/L</fullName>
    </recommendedName>
    <domain>
        <recommendedName>
            <fullName evidence="1">23S rRNA m2G2445 methyltransferase</fullName>
            <ecNumber evidence="1">2.1.1.173</ecNumber>
        </recommendedName>
        <alternativeName>
            <fullName evidence="1">rRNA (guanine-N(2)-)-methyltransferase RlmL</fullName>
        </alternativeName>
    </domain>
    <domain>
        <recommendedName>
            <fullName evidence="1">23S rRNA m7G2069 methyltransferase</fullName>
            <ecNumber evidence="1">2.1.1.264</ecNumber>
        </recommendedName>
        <alternativeName>
            <fullName evidence="1">rRNA (guanine-N(7)-)-methyltransferase RlmK</fullName>
        </alternativeName>
    </domain>
</protein>
<sequence>MSTPENTLVTPNTSDTIPTASAAKRYDIVVTCADGLEAPLQTELSHMDISHELKSTGRIAVNATLEQIYKICLWSRVASRVLLPIKKRNINKEYDVAEQLNGLARTVDWTEWFELDNTFAIRMSVDKRVQVSQQFAMLRIKDAIADTFSEKLDARPDVDSNNPDFPIYATVNEKQAEIFLDLSGTSLHRRGYRVAMTDAPLKENLAAGLLYTVGWHKTKNSYSALIDPMCGSGTFIIEALLMHCDYPVGIDKAESQFGFYNWQEHDSELWQQCVVQAQERFHNGLQKAAAGKLPTILGFDADAGAIKAVHKNLIAAGLIELIPHLTLEQRPLSQLKIALAKPLLDRKLKRPLVITNPPYGERLGESDFIKPLYQGLGLTLQEIFAKQKYQPMLGLLAAHVEQADVLPIEDPQTLRCHNGAITVYFRHGQLIRKEGESLITRFEKTEIKVDEAQDFVNRLQKNVNHLKKLAAKEDVTNLRVYDADLPDYKVAIDVYGDYVHVQEWAPPKSIPPETARKRFNLALMGIREVFGINREQIFIKTRARQVGNTQYGNPEASAQSKESKNAPEPKKDNRNRYKGNKFQQAREEAKRQEAQRLAQKKRKMHVVQEDGAYFYVNFTDYLDTGLFIDHRNMRSMIRSASRGADVLNLFAYTCTASVHAALGGAKSVTSVDLSQNYLDWGKQNFALNGLDVTTSRYQFIASDIFDWIKDNTDQFDVIFIDPPTFSNSKKFQGTFDVQRDHTALINRAMNRLANGGVIYFSNNFTKFELDEELYDRYEVTEITSETIGFDFNPKKPIHHSFEIRHKL</sequence>
<reference key="1">
    <citation type="submission" date="2007-05" db="EMBL/GenBank/DDBJ databases">
        <title>Complete sequence of chromosome of Psychrobacter sp. PRwf-1.</title>
        <authorList>
            <consortium name="US DOE Joint Genome Institute"/>
            <person name="Copeland A."/>
            <person name="Lucas S."/>
            <person name="Lapidus A."/>
            <person name="Barry K."/>
            <person name="Detter J.C."/>
            <person name="Glavina del Rio T."/>
            <person name="Hammon N."/>
            <person name="Israni S."/>
            <person name="Dalin E."/>
            <person name="Tice H."/>
            <person name="Pitluck S."/>
            <person name="Chain P."/>
            <person name="Malfatti S."/>
            <person name="Shin M."/>
            <person name="Vergez L."/>
            <person name="Schmutz J."/>
            <person name="Larimer F."/>
            <person name="Land M."/>
            <person name="Hauser L."/>
            <person name="Kyrpides N."/>
            <person name="Kim E."/>
            <person name="Tiedje J."/>
            <person name="Richardson P."/>
        </authorList>
    </citation>
    <scope>NUCLEOTIDE SEQUENCE [LARGE SCALE GENOMIC DNA]</scope>
    <source>
        <strain>PRwf-1</strain>
    </source>
</reference>
<gene>
    <name evidence="1" type="primary">rlmL</name>
    <name type="ordered locus">PsycPRwf_1771</name>
</gene>
<name>RLMKL_PSYWF</name>
<organism>
    <name type="scientific">Psychrobacter sp. (strain PRwf-1)</name>
    <dbReference type="NCBI Taxonomy" id="349106"/>
    <lineage>
        <taxon>Bacteria</taxon>
        <taxon>Pseudomonadati</taxon>
        <taxon>Pseudomonadota</taxon>
        <taxon>Gammaproteobacteria</taxon>
        <taxon>Moraxellales</taxon>
        <taxon>Moraxellaceae</taxon>
        <taxon>Psychrobacter</taxon>
    </lineage>
</organism>
<keyword id="KW-0963">Cytoplasm</keyword>
<keyword id="KW-0489">Methyltransferase</keyword>
<keyword id="KW-0694">RNA-binding</keyword>
<keyword id="KW-0698">rRNA processing</keyword>
<keyword id="KW-0949">S-adenosyl-L-methionine</keyword>
<keyword id="KW-0808">Transferase</keyword>
<comment type="function">
    <text evidence="1">Specifically methylates the guanine in position 2445 (m2G2445) and the guanine in position 2069 (m7G2069) of 23S rRNA.</text>
</comment>
<comment type="catalytic activity">
    <reaction evidence="1">
        <text>guanosine(2445) in 23S rRNA + S-adenosyl-L-methionine = N(2)-methylguanosine(2445) in 23S rRNA + S-adenosyl-L-homocysteine + H(+)</text>
        <dbReference type="Rhea" id="RHEA:42740"/>
        <dbReference type="Rhea" id="RHEA-COMP:10215"/>
        <dbReference type="Rhea" id="RHEA-COMP:10216"/>
        <dbReference type="ChEBI" id="CHEBI:15378"/>
        <dbReference type="ChEBI" id="CHEBI:57856"/>
        <dbReference type="ChEBI" id="CHEBI:59789"/>
        <dbReference type="ChEBI" id="CHEBI:74269"/>
        <dbReference type="ChEBI" id="CHEBI:74481"/>
        <dbReference type="EC" id="2.1.1.173"/>
    </reaction>
</comment>
<comment type="catalytic activity">
    <reaction evidence="1">
        <text>guanosine(2069) in 23S rRNA + S-adenosyl-L-methionine = N(2)-methylguanosine(2069) in 23S rRNA + S-adenosyl-L-homocysteine + H(+)</text>
        <dbReference type="Rhea" id="RHEA:43772"/>
        <dbReference type="Rhea" id="RHEA-COMP:10688"/>
        <dbReference type="Rhea" id="RHEA-COMP:10689"/>
        <dbReference type="ChEBI" id="CHEBI:15378"/>
        <dbReference type="ChEBI" id="CHEBI:57856"/>
        <dbReference type="ChEBI" id="CHEBI:59789"/>
        <dbReference type="ChEBI" id="CHEBI:74269"/>
        <dbReference type="ChEBI" id="CHEBI:74481"/>
        <dbReference type="EC" id="2.1.1.264"/>
    </reaction>
</comment>
<comment type="subcellular location">
    <subcellularLocation>
        <location evidence="1">Cytoplasm</location>
    </subcellularLocation>
</comment>
<comment type="similarity">
    <text evidence="1">Belongs to the methyltransferase superfamily. RlmKL family.</text>
</comment>
<accession>A5WGC0</accession>
<dbReference type="EC" id="2.1.1.173" evidence="1"/>
<dbReference type="EC" id="2.1.1.264" evidence="1"/>
<dbReference type="EMBL" id="CP000713">
    <property type="protein sequence ID" value="ABQ94711.1"/>
    <property type="molecule type" value="Genomic_DNA"/>
</dbReference>
<dbReference type="SMR" id="A5WGC0"/>
<dbReference type="STRING" id="349106.PsycPRwf_1771"/>
<dbReference type="KEGG" id="prw:PsycPRwf_1771"/>
<dbReference type="eggNOG" id="COG0116">
    <property type="taxonomic scope" value="Bacteria"/>
</dbReference>
<dbReference type="eggNOG" id="COG1092">
    <property type="taxonomic scope" value="Bacteria"/>
</dbReference>
<dbReference type="HOGENOM" id="CLU_014042_2_0_6"/>
<dbReference type="GO" id="GO:0005737">
    <property type="term" value="C:cytoplasm"/>
    <property type="evidence" value="ECO:0007669"/>
    <property type="project" value="UniProtKB-SubCell"/>
</dbReference>
<dbReference type="GO" id="GO:0052915">
    <property type="term" value="F:23S rRNA (guanine(2445)-N(2))-methyltransferase activity"/>
    <property type="evidence" value="ECO:0007669"/>
    <property type="project" value="UniProtKB-UniRule"/>
</dbReference>
<dbReference type="GO" id="GO:0003723">
    <property type="term" value="F:RNA binding"/>
    <property type="evidence" value="ECO:0007669"/>
    <property type="project" value="UniProtKB-KW"/>
</dbReference>
<dbReference type="GO" id="GO:0070043">
    <property type="term" value="F:rRNA (guanine-N7-)-methyltransferase activity"/>
    <property type="evidence" value="ECO:0007669"/>
    <property type="project" value="UniProtKB-UniRule"/>
</dbReference>
<dbReference type="CDD" id="cd02440">
    <property type="entry name" value="AdoMet_MTases"/>
    <property type="match status" value="1"/>
</dbReference>
<dbReference type="CDD" id="cd11715">
    <property type="entry name" value="THUMP_AdoMetMT"/>
    <property type="match status" value="1"/>
</dbReference>
<dbReference type="Gene3D" id="3.30.2130.30">
    <property type="match status" value="1"/>
</dbReference>
<dbReference type="Gene3D" id="3.30.750.80">
    <property type="entry name" value="RNA methyltransferase domain (HRMD) like"/>
    <property type="match status" value="1"/>
</dbReference>
<dbReference type="Gene3D" id="3.40.50.150">
    <property type="entry name" value="Vaccinia Virus protein VP39"/>
    <property type="match status" value="2"/>
</dbReference>
<dbReference type="HAMAP" id="MF_01858">
    <property type="entry name" value="23SrRNA_methyltr_KL"/>
    <property type="match status" value="1"/>
</dbReference>
<dbReference type="InterPro" id="IPR017244">
    <property type="entry name" value="23SrRNA_methyltr_KL"/>
</dbReference>
<dbReference type="InterPro" id="IPR002052">
    <property type="entry name" value="DNA_methylase_N6_adenine_CS"/>
</dbReference>
<dbReference type="InterPro" id="IPR000241">
    <property type="entry name" value="RlmKL-like_Mtase"/>
</dbReference>
<dbReference type="InterPro" id="IPR053943">
    <property type="entry name" value="RlmKL-like_Mtase_CS"/>
</dbReference>
<dbReference type="InterPro" id="IPR054170">
    <property type="entry name" value="RlmL_1st"/>
</dbReference>
<dbReference type="InterPro" id="IPR019614">
    <property type="entry name" value="SAM-dep_methyl-trfase"/>
</dbReference>
<dbReference type="InterPro" id="IPR029063">
    <property type="entry name" value="SAM-dependent_MTases_sf"/>
</dbReference>
<dbReference type="InterPro" id="IPR004114">
    <property type="entry name" value="THUMP_dom"/>
</dbReference>
<dbReference type="NCBIfam" id="NF008748">
    <property type="entry name" value="PRK11783.1"/>
    <property type="match status" value="1"/>
</dbReference>
<dbReference type="PANTHER" id="PTHR47313">
    <property type="entry name" value="RIBOSOMAL RNA LARGE SUBUNIT METHYLTRANSFERASE K/L"/>
    <property type="match status" value="1"/>
</dbReference>
<dbReference type="PANTHER" id="PTHR47313:SF1">
    <property type="entry name" value="RIBOSOMAL RNA LARGE SUBUNIT METHYLTRANSFERASE K_L"/>
    <property type="match status" value="1"/>
</dbReference>
<dbReference type="Pfam" id="PF10672">
    <property type="entry name" value="Methyltrans_SAM"/>
    <property type="match status" value="1"/>
</dbReference>
<dbReference type="Pfam" id="PF22020">
    <property type="entry name" value="RlmL_1st"/>
    <property type="match status" value="1"/>
</dbReference>
<dbReference type="Pfam" id="PF02926">
    <property type="entry name" value="THUMP"/>
    <property type="match status" value="1"/>
</dbReference>
<dbReference type="Pfam" id="PF01170">
    <property type="entry name" value="UPF0020"/>
    <property type="match status" value="1"/>
</dbReference>
<dbReference type="PIRSF" id="PIRSF037618">
    <property type="entry name" value="RNA_Mtase_bacteria_prd"/>
    <property type="match status" value="1"/>
</dbReference>
<dbReference type="SMART" id="SM00981">
    <property type="entry name" value="THUMP"/>
    <property type="match status" value="1"/>
</dbReference>
<dbReference type="SUPFAM" id="SSF53335">
    <property type="entry name" value="S-adenosyl-L-methionine-dependent methyltransferases"/>
    <property type="match status" value="2"/>
</dbReference>
<dbReference type="PROSITE" id="PS51165">
    <property type="entry name" value="THUMP"/>
    <property type="match status" value="1"/>
</dbReference>
<dbReference type="PROSITE" id="PS01261">
    <property type="entry name" value="UPF0020"/>
    <property type="match status" value="1"/>
</dbReference>
<feature type="chain" id="PRO_0000366801" description="Ribosomal RNA large subunit methyltransferase K/L">
    <location>
        <begin position="1"/>
        <end position="807"/>
    </location>
</feature>
<feature type="domain" description="THUMP" evidence="1">
    <location>
        <begin position="67"/>
        <end position="182"/>
    </location>
</feature>
<feature type="region of interest" description="Disordered" evidence="2">
    <location>
        <begin position="548"/>
        <end position="602"/>
    </location>
</feature>
<feature type="compositionally biased region" description="Polar residues" evidence="2">
    <location>
        <begin position="548"/>
        <end position="560"/>
    </location>
</feature>
<feature type="compositionally biased region" description="Basic and acidic residues" evidence="2">
    <location>
        <begin position="561"/>
        <end position="575"/>
    </location>
</feature>
<feature type="compositionally biased region" description="Basic and acidic residues" evidence="2">
    <location>
        <begin position="584"/>
        <end position="594"/>
    </location>
</feature>